<accession>A1KH25</accession>
<proteinExistence type="inferred from homology"/>
<dbReference type="EC" id="2.1.1.-"/>
<dbReference type="EMBL" id="AM408590">
    <property type="protein sequence ID" value="CAL70931.1"/>
    <property type="molecule type" value="Genomic_DNA"/>
</dbReference>
<dbReference type="RefSeq" id="WP_003404654.1">
    <property type="nucleotide sequence ID" value="NC_008769.1"/>
</dbReference>
<dbReference type="SMR" id="A1KH25"/>
<dbReference type="KEGG" id="mbb:BCG_0945c"/>
<dbReference type="HOGENOM" id="CLU_056160_2_1_11"/>
<dbReference type="Proteomes" id="UP000001472">
    <property type="component" value="Chromosome"/>
</dbReference>
<dbReference type="GO" id="GO:0008168">
    <property type="term" value="F:methyltransferase activity"/>
    <property type="evidence" value="ECO:0007669"/>
    <property type="project" value="UniProtKB-KW"/>
</dbReference>
<dbReference type="GO" id="GO:0032259">
    <property type="term" value="P:methylation"/>
    <property type="evidence" value="ECO:0007669"/>
    <property type="project" value="UniProtKB-KW"/>
</dbReference>
<dbReference type="FunFam" id="3.40.50.150:FF:000152">
    <property type="entry name" value="S-adenosyl-L-methionine-dependent methyltransferase"/>
    <property type="match status" value="1"/>
</dbReference>
<dbReference type="Gene3D" id="3.40.50.150">
    <property type="entry name" value="Vaccinia Virus protein VP39"/>
    <property type="match status" value="1"/>
</dbReference>
<dbReference type="InterPro" id="IPR007213">
    <property type="entry name" value="Ppm1/Ppm2/Tcmp"/>
</dbReference>
<dbReference type="InterPro" id="IPR029063">
    <property type="entry name" value="SAM-dependent_MTases_sf"/>
</dbReference>
<dbReference type="InterPro" id="IPR011610">
    <property type="entry name" value="SAM_mthyl_Trfase_ML2640-like"/>
</dbReference>
<dbReference type="NCBIfam" id="TIGR00027">
    <property type="entry name" value="mthyl_TIGR00027"/>
    <property type="match status" value="1"/>
</dbReference>
<dbReference type="PANTHER" id="PTHR43619">
    <property type="entry name" value="S-ADENOSYL-L-METHIONINE-DEPENDENT METHYLTRANSFERASE YKTD-RELATED"/>
    <property type="match status" value="1"/>
</dbReference>
<dbReference type="PANTHER" id="PTHR43619:SF2">
    <property type="entry name" value="S-ADENOSYL-L-METHIONINE-DEPENDENT METHYLTRANSFERASES SUPERFAMILY PROTEIN"/>
    <property type="match status" value="1"/>
</dbReference>
<dbReference type="Pfam" id="PF04072">
    <property type="entry name" value="LCM"/>
    <property type="match status" value="1"/>
</dbReference>
<dbReference type="SUPFAM" id="SSF53335">
    <property type="entry name" value="S-adenosyl-L-methionine-dependent methyltransferases"/>
    <property type="match status" value="1"/>
</dbReference>
<name>Y945_MYCBP</name>
<sequence length="325" mass="36073">MRTEDDSWDVTTSVGSTGLLVAAARALETQKADPLAIDPYAEVFCRAAGGEWADVLDGKLPDHYLTTGDFGEHFVNFQGARTRYFDEYFSRATAAGMKQVVILAAGLDSRAFRLQWPIGTTIFELDRPQVLDFKNAVLADYHIRPRAQRRSVAVDLRDEWQIALCNNGFDANRPSAWIAEGLLVYLSAEAQQRLFIGIDTLASPGSHVAVEEATPLDPCEFAAKLERERAANAQGDPRRFFQMVYNERWARATEWFDERGWRATATPLAEYLRRVGRAVPEADTEAAPMVTAITFVSAVRTGLVADPARTSPSSTSIGFKRFEAD</sequence>
<feature type="chain" id="PRO_0000361153" description="Putative S-adenosyl-L-methionine-dependent methyltransferase BCG_0945c">
    <location>
        <begin position="1"/>
        <end position="325"/>
    </location>
</feature>
<feature type="binding site" evidence="1">
    <location>
        <position position="126"/>
    </location>
    <ligand>
        <name>S-adenosyl-L-methionine</name>
        <dbReference type="ChEBI" id="CHEBI:59789"/>
    </ligand>
</feature>
<feature type="binding site" evidence="1">
    <location>
        <begin position="155"/>
        <end position="156"/>
    </location>
    <ligand>
        <name>S-adenosyl-L-methionine</name>
        <dbReference type="ChEBI" id="CHEBI:59789"/>
    </ligand>
</feature>
<reference key="1">
    <citation type="journal article" date="2007" name="Proc. Natl. Acad. Sci. U.S.A.">
        <title>Genome plasticity of BCG and impact on vaccine efficacy.</title>
        <authorList>
            <person name="Brosch R."/>
            <person name="Gordon S.V."/>
            <person name="Garnier T."/>
            <person name="Eiglmeier K."/>
            <person name="Frigui W."/>
            <person name="Valenti P."/>
            <person name="Dos Santos S."/>
            <person name="Duthoy S."/>
            <person name="Lacroix C."/>
            <person name="Garcia-Pelayo C."/>
            <person name="Inwald J.K."/>
            <person name="Golby P."/>
            <person name="Garcia J.N."/>
            <person name="Hewinson R.G."/>
            <person name="Behr M.A."/>
            <person name="Quail M.A."/>
            <person name="Churcher C."/>
            <person name="Barrell B.G."/>
            <person name="Parkhill J."/>
            <person name="Cole S.T."/>
        </authorList>
    </citation>
    <scope>NUCLEOTIDE SEQUENCE [LARGE SCALE GENOMIC DNA]</scope>
    <source>
        <strain>BCG / Pasteur 1173P2</strain>
    </source>
</reference>
<gene>
    <name type="ordered locus">BCG_0945c</name>
</gene>
<protein>
    <recommendedName>
        <fullName>Putative S-adenosyl-L-methionine-dependent methyltransferase BCG_0945c</fullName>
        <ecNumber>2.1.1.-</ecNumber>
    </recommendedName>
</protein>
<organism>
    <name type="scientific">Mycobacterium bovis (strain BCG / Pasteur 1173P2)</name>
    <dbReference type="NCBI Taxonomy" id="410289"/>
    <lineage>
        <taxon>Bacteria</taxon>
        <taxon>Bacillati</taxon>
        <taxon>Actinomycetota</taxon>
        <taxon>Actinomycetes</taxon>
        <taxon>Mycobacteriales</taxon>
        <taxon>Mycobacteriaceae</taxon>
        <taxon>Mycobacterium</taxon>
        <taxon>Mycobacterium tuberculosis complex</taxon>
    </lineage>
</organism>
<comment type="function">
    <text evidence="1">Exhibits S-adenosyl-L-methionine-dependent methyltransferase activity.</text>
</comment>
<comment type="similarity">
    <text evidence="2">Belongs to the UPF0677 family.</text>
</comment>
<evidence type="ECO:0000250" key="1"/>
<evidence type="ECO:0000305" key="2"/>
<keyword id="KW-0489">Methyltransferase</keyword>
<keyword id="KW-0949">S-adenosyl-L-methionine</keyword>
<keyword id="KW-0808">Transferase</keyword>